<proteinExistence type="evidence at protein level"/>
<evidence type="ECO:0000250" key="1">
    <source>
        <dbReference type="UniProtKB" id="Q9R155"/>
    </source>
</evidence>
<evidence type="ECO:0000255" key="2"/>
<evidence type="ECO:0000255" key="3">
    <source>
        <dbReference type="PROSITE-ProRule" id="PRU00198"/>
    </source>
</evidence>
<evidence type="ECO:0000269" key="4">
    <source>
    </source>
</evidence>
<evidence type="ECO:0000269" key="5">
    <source>
    </source>
</evidence>
<evidence type="ECO:0000269" key="6">
    <source>
    </source>
</evidence>
<evidence type="ECO:0000269" key="7">
    <source>
    </source>
</evidence>
<evidence type="ECO:0000269" key="8">
    <source>
    </source>
</evidence>
<evidence type="ECO:0000269" key="9">
    <source>
    </source>
</evidence>
<evidence type="ECO:0000269" key="10">
    <source>
    </source>
</evidence>
<evidence type="ECO:0000269" key="11">
    <source>
    </source>
</evidence>
<evidence type="ECO:0000269" key="12">
    <source>
    </source>
</evidence>
<evidence type="ECO:0000269" key="13">
    <source>
    </source>
</evidence>
<evidence type="ECO:0000269" key="14">
    <source>
    </source>
</evidence>
<evidence type="ECO:0000269" key="15">
    <source>
    </source>
</evidence>
<evidence type="ECO:0000269" key="16">
    <source>
    </source>
</evidence>
<evidence type="ECO:0000269" key="17">
    <source>
    </source>
</evidence>
<evidence type="ECO:0000269" key="18">
    <source>
    </source>
</evidence>
<evidence type="ECO:0000269" key="19">
    <source>
    </source>
</evidence>
<evidence type="ECO:0000269" key="20">
    <source>
    </source>
</evidence>
<evidence type="ECO:0000269" key="21">
    <source>
    </source>
</evidence>
<evidence type="ECO:0000269" key="22">
    <source>
    </source>
</evidence>
<evidence type="ECO:0000269" key="23">
    <source>
    </source>
</evidence>
<evidence type="ECO:0000269" key="24">
    <source>
    </source>
</evidence>
<evidence type="ECO:0000269" key="25">
    <source>
    </source>
</evidence>
<evidence type="ECO:0000269" key="26">
    <source>
    </source>
</evidence>
<evidence type="ECO:0000269" key="27">
    <source>
    </source>
</evidence>
<evidence type="ECO:0000269" key="28">
    <source>
    </source>
</evidence>
<evidence type="ECO:0000269" key="29">
    <source>
    </source>
</evidence>
<evidence type="ECO:0000269" key="30">
    <source>
    </source>
</evidence>
<evidence type="ECO:0000269" key="31">
    <source>
    </source>
</evidence>
<evidence type="ECO:0000269" key="32">
    <source>
    </source>
</evidence>
<evidence type="ECO:0000269" key="33">
    <source>
    </source>
</evidence>
<evidence type="ECO:0000269" key="34">
    <source>
    </source>
</evidence>
<evidence type="ECO:0000269" key="35">
    <source>
    </source>
</evidence>
<evidence type="ECO:0000269" key="36">
    <source>
    </source>
</evidence>
<evidence type="ECO:0000269" key="37">
    <source>
    </source>
</evidence>
<evidence type="ECO:0000269" key="38">
    <source>
    </source>
</evidence>
<evidence type="ECO:0000269" key="39">
    <source>
    </source>
</evidence>
<evidence type="ECO:0000303" key="40">
    <source>
    </source>
</evidence>
<evidence type="ECO:0000305" key="41"/>
<evidence type="ECO:0000305" key="42">
    <source>
    </source>
</evidence>
<evidence type="ECO:0000305" key="43">
    <source>
    </source>
</evidence>
<reference key="1">
    <citation type="journal article" date="1997" name="Nat. Genet.">
        <title>Pendred syndrome is caused by mutations in a putative sulphate transporter gene (PDS).</title>
        <authorList>
            <person name="Everett L.A."/>
            <person name="Glaser B."/>
            <person name="Beck J.C."/>
            <person name="Idol J.R."/>
            <person name="Buchs A."/>
            <person name="Heyman M."/>
            <person name="Adawi F."/>
            <person name="Hazani E."/>
            <person name="Nassir E."/>
            <person name="Baxevanis A.D."/>
            <person name="Sheffield V.C."/>
            <person name="Green E.D."/>
        </authorList>
    </citation>
    <scope>NUCLEOTIDE SEQUENCE [MRNA] (ISOFORM 1)</scope>
    <scope>TISSUE SPECIFICITY</scope>
    <scope>VARIANT PDS CYS-667</scope>
    <source>
        <tissue>Thyroid</tissue>
    </source>
</reference>
<reference key="2">
    <citation type="journal article" date="2004" name="Nat. Genet.">
        <title>Complete sequencing and characterization of 21,243 full-length human cDNAs.</title>
        <authorList>
            <person name="Ota T."/>
            <person name="Suzuki Y."/>
            <person name="Nishikawa T."/>
            <person name="Otsuki T."/>
            <person name="Sugiyama T."/>
            <person name="Irie R."/>
            <person name="Wakamatsu A."/>
            <person name="Hayashi K."/>
            <person name="Sato H."/>
            <person name="Nagai K."/>
            <person name="Kimura K."/>
            <person name="Makita H."/>
            <person name="Sekine M."/>
            <person name="Obayashi M."/>
            <person name="Nishi T."/>
            <person name="Shibahara T."/>
            <person name="Tanaka T."/>
            <person name="Ishii S."/>
            <person name="Yamamoto J."/>
            <person name="Saito K."/>
            <person name="Kawai Y."/>
            <person name="Isono Y."/>
            <person name="Nakamura Y."/>
            <person name="Nagahari K."/>
            <person name="Murakami K."/>
            <person name="Yasuda T."/>
            <person name="Iwayanagi T."/>
            <person name="Wagatsuma M."/>
            <person name="Shiratori A."/>
            <person name="Sudo H."/>
            <person name="Hosoiri T."/>
            <person name="Kaku Y."/>
            <person name="Kodaira H."/>
            <person name="Kondo H."/>
            <person name="Sugawara M."/>
            <person name="Takahashi M."/>
            <person name="Kanda K."/>
            <person name="Yokoi T."/>
            <person name="Furuya T."/>
            <person name="Kikkawa E."/>
            <person name="Omura Y."/>
            <person name="Abe K."/>
            <person name="Kamihara K."/>
            <person name="Katsuta N."/>
            <person name="Sato K."/>
            <person name="Tanikawa M."/>
            <person name="Yamazaki M."/>
            <person name="Ninomiya K."/>
            <person name="Ishibashi T."/>
            <person name="Yamashita H."/>
            <person name="Murakawa K."/>
            <person name="Fujimori K."/>
            <person name="Tanai H."/>
            <person name="Kimata M."/>
            <person name="Watanabe M."/>
            <person name="Hiraoka S."/>
            <person name="Chiba Y."/>
            <person name="Ishida S."/>
            <person name="Ono Y."/>
            <person name="Takiguchi S."/>
            <person name="Watanabe S."/>
            <person name="Yosida M."/>
            <person name="Hotuta T."/>
            <person name="Kusano J."/>
            <person name="Kanehori K."/>
            <person name="Takahashi-Fujii A."/>
            <person name="Hara H."/>
            <person name="Tanase T.-O."/>
            <person name="Nomura Y."/>
            <person name="Togiya S."/>
            <person name="Komai F."/>
            <person name="Hara R."/>
            <person name="Takeuchi K."/>
            <person name="Arita M."/>
            <person name="Imose N."/>
            <person name="Musashino K."/>
            <person name="Yuuki H."/>
            <person name="Oshima A."/>
            <person name="Sasaki N."/>
            <person name="Aotsuka S."/>
            <person name="Yoshikawa Y."/>
            <person name="Matsunawa H."/>
            <person name="Ichihara T."/>
            <person name="Shiohata N."/>
            <person name="Sano S."/>
            <person name="Moriya S."/>
            <person name="Momiyama H."/>
            <person name="Satoh N."/>
            <person name="Takami S."/>
            <person name="Terashima Y."/>
            <person name="Suzuki O."/>
            <person name="Nakagawa S."/>
            <person name="Senoh A."/>
            <person name="Mizoguchi H."/>
            <person name="Goto Y."/>
            <person name="Shimizu F."/>
            <person name="Wakebe H."/>
            <person name="Hishigaki H."/>
            <person name="Watanabe T."/>
            <person name="Sugiyama A."/>
            <person name="Takemoto M."/>
            <person name="Kawakami B."/>
            <person name="Yamazaki M."/>
            <person name="Watanabe K."/>
            <person name="Kumagai A."/>
            <person name="Itakura S."/>
            <person name="Fukuzumi Y."/>
            <person name="Fujimori Y."/>
            <person name="Komiyama M."/>
            <person name="Tashiro H."/>
            <person name="Tanigami A."/>
            <person name="Fujiwara T."/>
            <person name="Ono T."/>
            <person name="Yamada K."/>
            <person name="Fujii Y."/>
            <person name="Ozaki K."/>
            <person name="Hirao M."/>
            <person name="Ohmori Y."/>
            <person name="Kawabata A."/>
            <person name="Hikiji T."/>
            <person name="Kobatake N."/>
            <person name="Inagaki H."/>
            <person name="Ikema Y."/>
            <person name="Okamoto S."/>
            <person name="Okitani R."/>
            <person name="Kawakami T."/>
            <person name="Noguchi S."/>
            <person name="Itoh T."/>
            <person name="Shigeta K."/>
            <person name="Senba T."/>
            <person name="Matsumura K."/>
            <person name="Nakajima Y."/>
            <person name="Mizuno T."/>
            <person name="Morinaga M."/>
            <person name="Sasaki M."/>
            <person name="Togashi T."/>
            <person name="Oyama M."/>
            <person name="Hata H."/>
            <person name="Watanabe M."/>
            <person name="Komatsu T."/>
            <person name="Mizushima-Sugano J."/>
            <person name="Satoh T."/>
            <person name="Shirai Y."/>
            <person name="Takahashi Y."/>
            <person name="Nakagawa K."/>
            <person name="Okumura K."/>
            <person name="Nagase T."/>
            <person name="Nomura N."/>
            <person name="Kikuchi H."/>
            <person name="Masuho Y."/>
            <person name="Yamashita R."/>
            <person name="Nakai K."/>
            <person name="Yada T."/>
            <person name="Nakamura Y."/>
            <person name="Ohara O."/>
            <person name="Isogai T."/>
            <person name="Sugano S."/>
        </authorList>
    </citation>
    <scope>NUCLEOTIDE SEQUENCE [LARGE SCALE MRNA] (ISOFORM 2)</scope>
    <source>
        <tissue>Amygdala</tissue>
    </source>
</reference>
<reference key="3">
    <citation type="journal article" date="2003" name="Nature">
        <title>The DNA sequence of human chromosome 7.</title>
        <authorList>
            <person name="Hillier L.W."/>
            <person name="Fulton R.S."/>
            <person name="Fulton L.A."/>
            <person name="Graves T.A."/>
            <person name="Pepin K.H."/>
            <person name="Wagner-McPherson C."/>
            <person name="Layman D."/>
            <person name="Maas J."/>
            <person name="Jaeger S."/>
            <person name="Walker R."/>
            <person name="Wylie K."/>
            <person name="Sekhon M."/>
            <person name="Becker M.C."/>
            <person name="O'Laughlin M.D."/>
            <person name="Schaller M.E."/>
            <person name="Fewell G.A."/>
            <person name="Delehaunty K.D."/>
            <person name="Miner T.L."/>
            <person name="Nash W.E."/>
            <person name="Cordes M."/>
            <person name="Du H."/>
            <person name="Sun H."/>
            <person name="Edwards J."/>
            <person name="Bradshaw-Cordum H."/>
            <person name="Ali J."/>
            <person name="Andrews S."/>
            <person name="Isak A."/>
            <person name="Vanbrunt A."/>
            <person name="Nguyen C."/>
            <person name="Du F."/>
            <person name="Lamar B."/>
            <person name="Courtney L."/>
            <person name="Kalicki J."/>
            <person name="Ozersky P."/>
            <person name="Bielicki L."/>
            <person name="Scott K."/>
            <person name="Holmes A."/>
            <person name="Harkins R."/>
            <person name="Harris A."/>
            <person name="Strong C.M."/>
            <person name="Hou S."/>
            <person name="Tomlinson C."/>
            <person name="Dauphin-Kohlberg S."/>
            <person name="Kozlowicz-Reilly A."/>
            <person name="Leonard S."/>
            <person name="Rohlfing T."/>
            <person name="Rock S.M."/>
            <person name="Tin-Wollam A.-M."/>
            <person name="Abbott A."/>
            <person name="Minx P."/>
            <person name="Maupin R."/>
            <person name="Strowmatt C."/>
            <person name="Latreille P."/>
            <person name="Miller N."/>
            <person name="Johnson D."/>
            <person name="Murray J."/>
            <person name="Woessner J.P."/>
            <person name="Wendl M.C."/>
            <person name="Yang S.-P."/>
            <person name="Schultz B.R."/>
            <person name="Wallis J.W."/>
            <person name="Spieth J."/>
            <person name="Bieri T.A."/>
            <person name="Nelson J.O."/>
            <person name="Berkowicz N."/>
            <person name="Wohldmann P.E."/>
            <person name="Cook L.L."/>
            <person name="Hickenbotham M.T."/>
            <person name="Eldred J."/>
            <person name="Williams D."/>
            <person name="Bedell J.A."/>
            <person name="Mardis E.R."/>
            <person name="Clifton S.W."/>
            <person name="Chissoe S.L."/>
            <person name="Marra M.A."/>
            <person name="Raymond C."/>
            <person name="Haugen E."/>
            <person name="Gillett W."/>
            <person name="Zhou Y."/>
            <person name="James R."/>
            <person name="Phelps K."/>
            <person name="Iadanoto S."/>
            <person name="Bubb K."/>
            <person name="Simms E."/>
            <person name="Levy R."/>
            <person name="Clendenning J."/>
            <person name="Kaul R."/>
            <person name="Kent W.J."/>
            <person name="Furey T.S."/>
            <person name="Baertsch R.A."/>
            <person name="Brent M.R."/>
            <person name="Keibler E."/>
            <person name="Flicek P."/>
            <person name="Bork P."/>
            <person name="Suyama M."/>
            <person name="Bailey J.A."/>
            <person name="Portnoy M.E."/>
            <person name="Torrents D."/>
            <person name="Chinwalla A.T."/>
            <person name="Gish W.R."/>
            <person name="Eddy S.R."/>
            <person name="McPherson J.D."/>
            <person name="Olson M.V."/>
            <person name="Eichler E.E."/>
            <person name="Green E.D."/>
            <person name="Waterston R.H."/>
            <person name="Wilson R.K."/>
        </authorList>
    </citation>
    <scope>NUCLEOTIDE SEQUENCE [LARGE SCALE GENOMIC DNA]</scope>
</reference>
<reference key="4">
    <citation type="journal article" date="1999" name="Nat. Genet.">
        <title>The Pendred syndrome gene encodes a chloride-iodide transport protein.</title>
        <authorList>
            <person name="Scott D.A."/>
            <person name="Wang R."/>
            <person name="Kreman T.M."/>
            <person name="Sheffield V.C."/>
            <person name="Karnishki L.P."/>
        </authorList>
    </citation>
    <scope>FUNCTION</scope>
    <scope>TRANSPORTER ACTIVITY</scope>
</reference>
<reference key="5">
    <citation type="journal article" date="2000" name="Am. J. Physiol.">
        <title>Human pendrin expressed in Xenopus laevis oocytes mediates chloride/formate exchange.</title>
        <authorList>
            <person name="Scott D.A."/>
            <person name="Karniski L.P."/>
        </authorList>
    </citation>
    <scope>FUNCTION</scope>
    <scope>TRANSPORTER ACTIVITY</scope>
</reference>
<reference key="6">
    <citation type="journal article" date="2001" name="Proc. Natl. Acad. Sci. U.S.A.">
        <title>Pendrin, encoded by the Pendred syndrome gene, resides in the apical region of renal intercalated cells and mediates bicarbonate secretion.</title>
        <authorList>
            <person name="Royaux I.E."/>
            <person name="Wall S.M."/>
            <person name="Karniski L.P."/>
            <person name="Everett L.A."/>
            <person name="Suzuki K."/>
            <person name="Knepper M.A."/>
            <person name="Green E.D."/>
        </authorList>
    </citation>
    <scope>SUBCELLULAR LOCATION</scope>
    <scope>TISSUE SPECIFICITY</scope>
</reference>
<reference key="7">
    <citation type="journal article" date="2002" name="J. Clin. Endocrinol. Metab.">
        <title>Pendrin is an iodide-specific apical porter responsible for iodide efflux from thyroid cells.</title>
        <authorList>
            <person name="Yoshida A."/>
            <person name="Taniguchi S."/>
            <person name="Hisatome I."/>
            <person name="Royaux I.E."/>
            <person name="Green E.D."/>
            <person name="Kohn L.D."/>
            <person name="Suzuki K."/>
        </authorList>
    </citation>
    <scope>FUNCTION</scope>
    <scope>TRANSPORTER ACTIVITY</scope>
</reference>
<reference key="8">
    <citation type="journal article" date="2004" name="Endocrinology">
        <title>Mechanism of iodide/chloride exchange by pendrin.</title>
        <authorList>
            <person name="Yoshida A."/>
            <person name="Hisatome I."/>
            <person name="Taniguchi S."/>
            <person name="Sasaki N."/>
            <person name="Yamamoto Y."/>
            <person name="Miake J."/>
            <person name="Fukui H."/>
            <person name="Shimizu H."/>
            <person name="Okamura T."/>
            <person name="Okura T."/>
            <person name="Igawa O."/>
            <person name="Shigemasa C."/>
            <person name="Green E.D."/>
            <person name="Kohn L.D."/>
            <person name="Suzuki K."/>
        </authorList>
    </citation>
    <scope>FUNCTION</scope>
    <scope>TRANSPORTER ACTIVITY</scope>
</reference>
<reference key="9">
    <citation type="journal article" date="2022" name="Front. Mol. Biosci.">
        <title>Identification of IQGAP1 as a SLC26A4 (Pendrin)-Binding Protein in the Kidney.</title>
        <authorList>
            <person name="Xu J."/>
            <person name="Barone S."/>
            <person name="Varasteh Kia M."/>
            <person name="Holliday L.S."/>
            <person name="Zahedi K."/>
            <person name="Soleimani M."/>
        </authorList>
    </citation>
    <scope>FUNCTION</scope>
    <scope>TRANSPORTER ACTIVITY</scope>
    <scope>SUBCELLULAR LOCATION</scope>
    <scope>INTERACTION WITH IQGAP1</scope>
</reference>
<reference key="10">
    <citation type="journal article" date="1998" name="Hum. Mol. Genet.">
        <title>Two frequent missense mutations in Pendred syndrome.</title>
        <authorList>
            <person name="van Hauwe P."/>
            <person name="Everett L.A."/>
            <person name="Coucke P."/>
            <person name="Scott D.A."/>
            <person name="Kraft M.L."/>
            <person name="Ris-Stalpers C."/>
            <person name="Bolder C."/>
            <person name="Otten B."/>
            <person name="de Vijlder J.J.M."/>
            <person name="Dietrich N.L."/>
            <person name="Ramesh A."/>
            <person name="Srisailapathy S.C.R."/>
            <person name="Parving A."/>
            <person name="Cremers C.W.R.J."/>
            <person name="Willems P.J."/>
            <person name="Smith R.J.H."/>
            <person name="Green E.D."/>
            <person name="van Camp G."/>
        </authorList>
    </citation>
    <scope>VARIANTS PDS PHE-138; ALA-139; VAL-209; PRO-236; HIS-271; HIS-409; PRO-416; TRP-445; TYR-565 AND ARG-723</scope>
</reference>
<reference key="11">
    <citation type="journal article" date="1998" name="Hum. Mol. Genet.">
        <title>Molecular analysis of the PDS gene in Pendred syndrome (sensorineural hearing loss and goitre).</title>
        <authorList>
            <person name="Coyle B."/>
            <person name="Reardon W."/>
            <person name="Herbrick J.-A."/>
            <person name="Tsui L.-C."/>
            <person name="Gausden E."/>
            <person name="Lee J."/>
            <person name="Coffey R."/>
            <person name="Grueters A."/>
            <person name="Grossman A."/>
            <person name="Phelps P.D."/>
            <person name="Luxon L."/>
            <person name="Kendall-Taylor P."/>
            <person name="Scherer S.W."/>
            <person name="Trembath R.C."/>
        </authorList>
    </citation>
    <scope>VARIANTS PDS PHE-138; PRO-236; GLY-384; HIS-409; MET-410; PRO-416; HIS-530; CYS-556 AND GLU-672</scope>
</reference>
<reference key="12">
    <citation type="journal article" date="1998" name="Nat. Genet.">
        <title>A mutation in PDS causes non-syndromic recessive deafness.</title>
        <authorList>
            <person name="Li X.C."/>
            <person name="Everett L.A."/>
            <person name="Lalwani A.K."/>
            <person name="Desmukh D."/>
            <person name="Friedman T.B."/>
            <person name="Green E.D."/>
            <person name="Wilcox E.R."/>
        </authorList>
    </citation>
    <scope>VARIANTS DFNB4 LEU-490 AND SER-497</scope>
</reference>
<reference key="13">
    <citation type="journal article" date="1999" name="Hum. Genet.">
        <title>Non-syndromic hearing loss associated with enlarged vestibular aqueduct is caused by PDS mutations.</title>
        <authorList>
            <person name="Usami S."/>
            <person name="Abe S."/>
            <person name="Weston M.D."/>
            <person name="Shinkawa H."/>
            <person name="Van Camp G."/>
            <person name="Kimberling W.J."/>
        </authorList>
    </citation>
    <scope>VARIANTS DFNB4 VAL-209; GLU-369; VAL-372; MET-721 AND ARG-723</scope>
</reference>
<reference key="14">
    <citation type="journal article" date="2000" name="Am. J. Med. Genet.">
        <title>Pendred syndrome: phenotypic variability in two families carrying the same PDS missense mutation.</title>
        <authorList>
            <person name="Masmoudi S."/>
            <person name="Charfedine I."/>
            <person name="Hmani M."/>
            <person name="Grati M."/>
            <person name="Ghorbel A.M."/>
            <person name="Elgaied-Boulila A."/>
            <person name="Drira M."/>
            <person name="Hardelin J.-P."/>
            <person name="Ayadi M."/>
        </authorList>
    </citation>
    <scope>VARIANT PDS TRP-445</scope>
</reference>
<reference key="15">
    <citation type="journal article" date="2000" name="Clin. Endocrinol. (Oxf.)">
        <title>A novel mutation in the pendrin gene associated with Pendred's syndrome.</title>
        <authorList>
            <person name="Bogazzi F."/>
            <person name="Raggi F."/>
            <person name="Ultimieri F."/>
            <person name="Campomori A."/>
            <person name="Cosci C."/>
            <person name="Berrettini S."/>
            <person name="Neri E."/>
            <person name="La Rocca R."/>
            <person name="Ronca G."/>
            <person name="Martino E."/>
            <person name="Bartalena L."/>
        </authorList>
    </citation>
    <scope>VARIANT PDS ASN-508</scope>
</reference>
<reference key="16">
    <citation type="journal article" date="2000" name="Eur. J. Hum. Genet.">
        <title>Deafness heterogeneity in a Druze isolate from the Middle East: novel OTOF and PDS mutations, low prevalence of GJB2 35delG mutation and indication for a new DFNB locus.</title>
        <authorList>
            <person name="Adato A."/>
            <person name="Raskin L."/>
            <person name="Petit C."/>
            <person name="Bonne-Tamir B."/>
        </authorList>
    </citation>
    <scope>VARIANT PDS ILE-193</scope>
</reference>
<reference key="17">
    <citation type="journal article" date="2000" name="QJM">
        <title>Enlarged vestibular aqueduct: a radiological marker of Pendred syndrome, and mutation of the PDS gene.</title>
        <authorList>
            <person name="Reardon W."/>
            <person name="O'Mahoney C.F."/>
            <person name="Trembath R."/>
            <person name="Jan H."/>
            <person name="Phelps P.D."/>
        </authorList>
    </citation>
    <scope>VARIANTS DFNB4 PHE-117; VAL-209; PRO-236; MET-410; PRO-416; TRP-445 AND ARG-446</scope>
</reference>
<reference key="18">
    <citation type="journal article" date="2001" name="Eur. J. Endocrinol.">
        <title>Clinical and molecular analysis of three Mexican families with Pendred's syndrome.</title>
        <authorList>
            <person name="Gonzalez Trevino O."/>
            <person name="Karamanoglu Arseven O."/>
            <person name="Ceballos C.J."/>
            <person name="Vives V.I."/>
            <person name="Ramirez R.C."/>
            <person name="Gomez V.V."/>
            <person name="Medeiros-Neto G."/>
            <person name="Kopp P."/>
        </authorList>
    </citation>
    <scope>VARIANTS PDS PHE-138 AND PRO-411</scope>
</reference>
<reference key="19">
    <citation type="journal article" date="2001" name="Hum. Mutat.">
        <title>Pendred syndrome, DFNB4, and PDS/SLC26A4 identification of eight novel mutations and possible genotype-phenotype correlations.</title>
        <authorList>
            <person name="Campbell C."/>
            <person name="Cucci R.A."/>
            <person name="Prasad S."/>
            <person name="Green G.E."/>
            <person name="Edeal J.B."/>
            <person name="Galer C.E."/>
            <person name="Karniski L.P."/>
            <person name="Sheffield V.C."/>
            <person name="Smith R.J.H."/>
        </authorList>
    </citation>
    <scope>VARIANTS PDS GLN-29; CYS-105; ASP-106; PHE-138; VAL-209; PRO-236; LEU-335; PRO-416; ASP-480; HIS-530; ALA-653 AND GLU-672</scope>
    <scope>VARIANT SER-597</scope>
</reference>
<reference key="20">
    <citation type="journal article" date="2001" name="Hum. Mutat.">
        <title>Identification of five new mutations of PDS/SLC26A4 in Mediterranean families with hearing impairment.</title>
        <authorList>
            <person name="Lopez-Bigas N."/>
            <person name="Melchionda S."/>
            <person name="de Cid R."/>
            <person name="Grifa A."/>
            <person name="Zelante L."/>
            <person name="Govea N."/>
            <person name="Arbones M.L."/>
            <person name="Gasparini P."/>
            <person name="Estivill X."/>
        </authorList>
    </citation>
    <scope>VARIANTS PDS TRP-445; HIS-556 AND MET-721</scope>
    <scope>VARIANTS DFNB4 ILE-132 AND MET-410</scope>
</reference>
<reference key="21">
    <citation type="journal article" date="2002" name="Hum. Mutat.">
        <authorList>
            <person name="Lopez-Bigas N."/>
            <person name="Melchionda S."/>
            <person name="de Cid R."/>
            <person name="Grifa A."/>
            <person name="Zelante L."/>
            <person name="Govea N."/>
            <person name="Arbones M.L."/>
            <person name="Gasparini P."/>
            <person name="Estivill X."/>
        </authorList>
    </citation>
    <scope>ERRATUM OF PUBMED:11748854</scope>
</reference>
<reference key="22">
    <citation type="journal article" date="2002" name="J. Clin. Endocrinol. Metab.">
        <title>Mutations of the PDS gene, encoding pendrin, are associated with protein mislocalization and loss of iodide efflux: implications for thyroid dysfunction in Pendred syndrome.</title>
        <authorList>
            <person name="Taylor J.P."/>
            <person name="Metcalfe R.A."/>
            <person name="Watson P.F."/>
            <person name="Weetman A.P."/>
            <person name="Trembath R.C."/>
        </authorList>
    </citation>
    <scope>CHARACTERIZATION OF VARIANTS PDS ARG-102; PHE-117; PHE-138; VAL-209; PRO-236; MET-410; ARG-446; CYS-556 AND GLU-672</scope>
    <scope>FUNCTION</scope>
    <scope>TRANSPORTER ACTIVITY</scope>
    <scope>SUBCELLULAR LOCATION</scope>
</reference>
<reference key="23">
    <citation type="journal article" date="2002" name="Pediatr. Res.">
        <title>Differential diagnosis between Pendred and pseudo-Pendred syndromes: clinical, radiologic, and molecular studies.</title>
        <authorList>
            <person name="Fugazzola L."/>
            <person name="Cerutti N."/>
            <person name="Mannavola D."/>
            <person name="Crino A."/>
            <person name="Cassio A."/>
            <person name="Gasparoni P."/>
            <person name="Vannucchi G."/>
            <person name="Beck-Peccoz P."/>
        </authorList>
    </citation>
    <scope>VARIANTS PDS ARG-28; THR-133; HIS-409 AND MET-410</scope>
    <scope>VARIANT SER-597</scope>
</reference>
<reference key="24">
    <citation type="journal article" date="2003" name="Clin. Genet.">
        <title>Screening the SLC26A4 gene in probands with deafness and goiter (Pendred syndrome) ascertained from a large group of students of the schools for the deaf in Turkey.</title>
        <authorList>
            <person name="Tekin M."/>
            <person name="Akcayoez D."/>
            <person name="Comak E."/>
            <person name="Bogoclu G."/>
            <person name="Duman T."/>
            <person name="Fitoz S."/>
            <person name="Ilhan I."/>
            <person name="Akar N."/>
        </authorList>
    </citation>
    <scope>VARIANTS PDS ASP-239 AND ARG-723</scope>
</reference>
<reference key="25">
    <citation type="journal article" date="2003" name="Eur. J. Hum. Genet.">
        <title>Distribution and frequencies of PDS (SLC26A4) mutations in Pendred syndrome and nonsyndromic hearing loss associated with enlarged vestibular aqueduct: a unique spectrum of mutations in Japanese.</title>
        <authorList>
            <person name="Tsukamoto K."/>
            <person name="Suzuki H."/>
            <person name="Harada D."/>
            <person name="Namba A."/>
            <person name="Abe S."/>
            <person name="Usami S."/>
        </authorList>
    </citation>
    <scope>VARIANTS DFNB4 SER-123; VAL-147 AND PHE-666</scope>
</reference>
<reference key="26">
    <citation type="journal article" date="2003" name="J. Clin. Endocrinol. Metab.">
        <title>Mutations in the PDS gene in German families with Pendred's syndrome: V138F is a founder mutation.</title>
        <authorList>
            <person name="Borck G."/>
            <person name="Roth C."/>
            <person name="Martine U."/>
            <person name="Wildhardt G."/>
            <person name="Pohlenz J."/>
        </authorList>
    </citation>
    <scope>VARIANTS PDS THR-133; PHE-138; GLY-384 AND HIS-530</scope>
</reference>
<reference key="27">
    <citation type="journal article" date="2003" name="J. Med. Genet.">
        <title>Origins and frequencies of SLC26A4 (PDS) mutations in east and south Asians: global implications for the epidemiology of deafness.</title>
        <authorList>
            <person name="Park H.-J."/>
            <person name="Shaukat S."/>
            <person name="Liu X.-Z."/>
            <person name="Hahn S.H."/>
            <person name="Naz S."/>
            <person name="Ghosh M."/>
            <person name="Kim H.-N."/>
            <person name="Moon S.-K."/>
            <person name="Abe S."/>
            <person name="Tukamoto K."/>
            <person name="Riazuddin S."/>
            <person name="Kabra M."/>
            <person name="Erdenetungalag R."/>
            <person name="Radnaabazar J."/>
            <person name="Khan S."/>
            <person name="Pandya A."/>
            <person name="Usami S."/>
            <person name="Nance W.E."/>
            <person name="Wilcox E.R."/>
            <person name="Riazuddin S."/>
            <person name="Griffith A.J."/>
        </authorList>
    </citation>
    <scope>VARIANTS DFNB4 ARG-28; LEU-90; ASP-239; PRO-252; TYR-392; PRO-409; MET-410; LYS-457; GLN-676; MET-721 AND ARG-723</scope>
    <scope>VARIANT PHE-455</scope>
</reference>
<reference key="28">
    <citation type="journal article" date="2004" name="Am. J. Med. Genet. A">
        <title>Pendred syndrome and DFNB4-mutation screening of SLC26A4 by denaturing high-performance liquid chromatography and the identification of eleven novel mutations.</title>
        <authorList>
            <person name="Prasad S."/>
            <person name="Koelln K.A."/>
            <person name="Cucci R.A."/>
            <person name="Trembath R.C."/>
            <person name="Van Camp G."/>
            <person name="Smith R.J.H."/>
        </authorList>
    </citation>
    <scope>VARIANTS PDS/DFNB4 GLY-24; GLN-29; CYS-78; VAL-104; CYS-105; ASP-106; PHE-138; ALA-139; VAL-209; PRO-236; HIS-271; LEU-335; GLY-384; HIS-409; MET-410; PRO-416; ARG-421; ALA-429 DEL; TRP-445; ASP-480; HIS-530; CYS-556; TYR-565; ALA-653; GLU-672; SER-683 AND ARG-723</scope>
    <scope>VARIANTS TYR-324 AND SER-597</scope>
</reference>
<reference key="29">
    <citation type="journal article" date="2004" name="Clin. Genet.">
        <title>Screening of SLC26A4 (PDS) gene in Pendred's syndrome: a large spectrum of mutations in France and phenotypic heterogeneity.</title>
        <authorList>
            <person name="Blons H."/>
            <person name="Feldmann D."/>
            <person name="Duval V."/>
            <person name="Messaz O."/>
            <person name="Denoyelle F."/>
            <person name="Loundon N."/>
            <person name="Sergout-Allaoui A."/>
            <person name="Houang M."/>
            <person name="Duriez F."/>
            <person name="Lacombe D."/>
            <person name="Delobel B."/>
            <person name="Leman J."/>
            <person name="Catros H."/>
            <person name="Journel H."/>
            <person name="Drouin-Garraud V."/>
            <person name="Obstoy M.-F."/>
            <person name="Toutain A."/>
            <person name="Oden S."/>
            <person name="Toublanc J.E."/>
            <person name="Couderc R."/>
            <person name="Petit C."/>
            <person name="Garabedian E.-N."/>
            <person name="Marlin S."/>
        </authorList>
    </citation>
    <scope>VARIANTS PDS GLN-29; CYS-78; PRO-137; PHE-138; ILE-193; VAL-209; PRO-236; ASN-391; HIS-409; MET-410; PRO-416; TRP-445; HIS-530; ILE-552; PRO-694; MET-721 AND ASN-724</scope>
    <scope>VARIANT SER-597</scope>
</reference>
<reference key="30">
    <citation type="journal article" date="2004" name="J. Clin. Endocrinol. Metab.">
        <title>Intrafamilial variability of the deafness and goiter phenotype in Pendred syndrome caused by a T416P mutation in the SLC26A4 gene.</title>
        <authorList>
            <person name="Napiontek U."/>
            <person name="Borck G."/>
            <person name="Mueller-Forell W."/>
            <person name="Pfarr N."/>
            <person name="Bohnert A."/>
            <person name="Keilmann A."/>
            <person name="Pohlenz J."/>
        </authorList>
    </citation>
    <scope>VARIANT PDS PRO-416</scope>
</reference>
<reference key="31">
    <citation type="journal article" date="2005" name="J. Med. Genet.">
        <title>SLC26A4/PDS genotype-phenotype correlation in hearing loss with enlargement of the vestibular aqueduct (EVA): evidence that Pendred syndrome and non-syndromic EVA are distinct clinical and genetic entities.</title>
        <authorList>
            <person name="Pryor S.P."/>
            <person name="Madeo A.C."/>
            <person name="Reynolds J.C."/>
            <person name="Sarlis N.J."/>
            <person name="Arnos K.S."/>
            <person name="Nance W.E."/>
            <person name="Yang Y."/>
            <person name="Zalewski C.K."/>
            <person name="Brewer C.C."/>
            <person name="Butman J.A."/>
            <person name="Griffith A.J."/>
        </authorList>
    </citation>
    <scope>VARIANTS PDS ARG-514 AND SER-530</scope>
    <scope>VARIANTS GLY-609 AND CYS-776</scope>
</reference>
<reference key="32">
    <citation type="journal article" date="2006" name="J. Clin. Endocrinol. Metab.">
        <title>Goitrous congenital hypothyroidism and hearing impairment associated with mutations in the TPO and SLC26A4/PDS genes.</title>
        <authorList>
            <person name="Pfarr N."/>
            <person name="Borck G."/>
            <person name="Turk A."/>
            <person name="Napiontek U."/>
            <person name="Keilmann A."/>
            <person name="Mueller-Forell W."/>
            <person name="Kopp P."/>
            <person name="Pohlenz J."/>
        </authorList>
    </citation>
    <scope>VARIANT CYS-776</scope>
    <scope>CHARACTERIZATION OF VARIANT CYS-776</scope>
    <scope>FUNCTION</scope>
    <scope>TRANSPORTER ACTIVITY</scope>
</reference>
<reference key="33">
    <citation type="journal article" date="2006" name="Laryngoscope">
        <title>Temporal bone imaging in GJB2 deafness.</title>
        <authorList>
            <person name="Propst E.J."/>
            <person name="Blaser S."/>
            <person name="Stockley T.L."/>
            <person name="Harrison R.V."/>
            <person name="Gordon K.A."/>
            <person name="Papsin B.C."/>
        </authorList>
    </citation>
    <scope>VARIANT MET-99</scope>
</reference>
<reference key="34">
    <citation type="journal article" date="2009" name="Hum. Mutat.">
        <title>Hypo-functional SLC26A4 variants associated with nonsyndromic hearing loss and enlargement of the vestibular aqueduct: genotype-phenotype correlation or coincidental polymorphisms?</title>
        <authorList>
            <person name="Choi B.Y."/>
            <person name="Stewart A.K."/>
            <person name="Madeo A.C."/>
            <person name="Pryor S.P."/>
            <person name="Lenhard S."/>
            <person name="Kittles R."/>
            <person name="Eisenman D."/>
            <person name="Kim H.J."/>
            <person name="Niparko J."/>
            <person name="Thomsen J."/>
            <person name="Arnos K.S."/>
            <person name="Nance W.E."/>
            <person name="King K.A."/>
            <person name="Zalewski C.K."/>
            <person name="Brewer C.C."/>
            <person name="Shawker T."/>
            <person name="Reynolds J.C."/>
            <person name="Butman J.A."/>
            <person name="Karniski L.P."/>
            <person name="Alper S.L."/>
            <person name="Griffith A.J."/>
        </authorList>
    </citation>
    <scope>VARIANTS PDS PHE-138; VAL-209; PRO-236; GLY-384; MET-402; PRO-416; TRP-445; ARG-514; HIS-530; TYR-565 AND THR-775</scope>
    <scope>VARIANTS DFNB4 LEU-335; MET-402; SER-530 AND THR-775</scope>
    <scope>VARIANTS SER-597; GLY-609 AND CYS-776</scope>
</reference>
<reference key="35">
    <citation type="journal article" date="2010" name="Ann. Hum. Genet.">
        <title>Spectrum and frequency of SLC26A4 mutations among Czech patients with early hearing loss with and without enlarged vestibular aqueduct (EVA).</title>
        <authorList>
            <person name="Pourova R."/>
            <person name="Janousek P."/>
            <person name="Jurovcik M."/>
            <person name="Dvorakova M."/>
            <person name="Malikova M."/>
            <person name="Raskova D."/>
            <person name="Bendova O."/>
            <person name="Leonardi E."/>
            <person name="Murgia A."/>
            <person name="Kabelka Z."/>
            <person name="Astl J."/>
            <person name="Seeman P."/>
        </authorList>
    </citation>
    <scope>VARIANT DFNB4 ILE-281</scope>
    <scope>VARIANTS VAL-6; ALA-144; THR-185 AND SER-597</scope>
</reference>
<reference key="36">
    <citation type="journal article" date="2010" name="Hum. Genet.">
        <title>Novel human pathological mutations. Gene symbol: SLC26A4. Disease: Deafness, non-syndromic, autosomal recessive.</title>
        <authorList>
            <person name="Alasti F."/>
            <person name="Peeters N."/>
            <person name="Wuyts W."/>
            <person name="Sanati M.H."/>
            <person name="Van Camp G."/>
        </authorList>
    </citation>
    <scope>VARIANT DFNB4 LYS-558</scope>
</reference>
<reference key="37">
    <citation type="journal article" date="2013" name="JAMA Otolaryngol. Head Neck Surg.">
        <title>Use of SLC26A4 mutation testing for unilateral enlargement of the vestibular aqueduct.</title>
        <authorList>
            <person name="Chattaraj P."/>
            <person name="Reimold F.R."/>
            <person name="Muskett J.A."/>
            <person name="Shmukler B.E."/>
            <person name="Chien W.W."/>
            <person name="Madeo A.C."/>
            <person name="Pryor S.P."/>
            <person name="Zalewski C.K."/>
            <person name="Butman J.A."/>
            <person name="Brewer C.C."/>
            <person name="Kenna M.A."/>
            <person name="Alper S.L."/>
            <person name="Griffith A.J."/>
        </authorList>
    </citation>
    <scope>VARIANTS DFNB4 THR-185; LEU-335 AND THR-775</scope>
    <scope>VARIANTS LEU-335; GLY-384; TRP-445; SER-597 AND CYS-776</scope>
    <scope>CHARACTERIZATION OF VARIANT DFNB4 THR-185</scope>
    <scope>FUNCTION</scope>
    <scope>TRANSPORTER ACTIVITY</scope>
    <scope>SUBCELLULAR LOCATION</scope>
</reference>
<reference key="38">
    <citation type="journal article" date="2016" name="Nature">
        <title>Analysis of protein-coding genetic variation in 60,706 humans.</title>
        <authorList>
            <consortium name="Exome Aggregation Consortium"/>
            <person name="Lek M."/>
            <person name="Karczewski K.J."/>
            <person name="Minikel E.V."/>
            <person name="Samocha K.E."/>
            <person name="Banks E."/>
            <person name="Fennell T."/>
            <person name="O'Donnell-Luria A.H."/>
            <person name="Ware J.S."/>
            <person name="Hill A.J."/>
            <person name="Cummings B.B."/>
            <person name="Tukiainen T."/>
            <person name="Birnbaum D.P."/>
            <person name="Kosmicki J.A."/>
            <person name="Duncan L.E."/>
            <person name="Estrada K."/>
            <person name="Zhao F."/>
            <person name="Zou J."/>
            <person name="Pierce-Hoffman E."/>
            <person name="Berghout J."/>
            <person name="Cooper D.N."/>
            <person name="Deflaux N."/>
            <person name="DePristo M."/>
            <person name="Do R."/>
            <person name="Flannick J."/>
            <person name="Fromer M."/>
            <person name="Gauthier L."/>
            <person name="Goldstein J."/>
            <person name="Gupta N."/>
            <person name="Howrigan D."/>
            <person name="Kiezun A."/>
            <person name="Kurki M.I."/>
            <person name="Moonshine A.L."/>
            <person name="Natarajan P."/>
            <person name="Orozco L."/>
            <person name="Peloso G.M."/>
            <person name="Poplin R."/>
            <person name="Rivas M.A."/>
            <person name="Ruano-Rubio V."/>
            <person name="Rose S.A."/>
            <person name="Ruderfer D.M."/>
            <person name="Shakir K."/>
            <person name="Stenson P.D."/>
            <person name="Stevens C."/>
            <person name="Thomas B.P."/>
            <person name="Tiao G."/>
            <person name="Tusie-Luna M.T."/>
            <person name="Weisburd B."/>
            <person name="Won H.H."/>
            <person name="Yu D."/>
            <person name="Altshuler D.M."/>
            <person name="Ardissino D."/>
            <person name="Boehnke M."/>
            <person name="Danesh J."/>
            <person name="Donnelly S."/>
            <person name="Elosua R."/>
            <person name="Florez J.C."/>
            <person name="Gabriel S.B."/>
            <person name="Getz G."/>
            <person name="Glatt S.J."/>
            <person name="Hultman C.M."/>
            <person name="Kathiresan S."/>
            <person name="Laakso M."/>
            <person name="McCarroll S."/>
            <person name="McCarthy M.I."/>
            <person name="McGovern D."/>
            <person name="McPherson R."/>
            <person name="Neale B.M."/>
            <person name="Palotie A."/>
            <person name="Purcell S.M."/>
            <person name="Saleheen D."/>
            <person name="Scharf J.M."/>
            <person name="Sklar P."/>
            <person name="Sullivan P.F."/>
            <person name="Tuomilehto J."/>
            <person name="Tsuang M.T."/>
            <person name="Watkins H.C."/>
            <person name="Wilson J.G."/>
            <person name="Daly M.J."/>
            <person name="MacArthur D.G."/>
        </authorList>
    </citation>
    <scope>VARIANT PHE-455</scope>
</reference>
<reference key="39">
    <citation type="journal article" date="2017" name="Genet. Test. Mol. Biomarkers">
        <title>Molecular Analysis of Twelve Pakistani Families with Nonsyndromic or Syndromic Hearing Loss.</title>
        <authorList>
            <person name="Wang R."/>
            <person name="Han S."/>
            <person name="Khan A."/>
            <person name="Zhang X."/>
        </authorList>
    </citation>
    <scope>VARIANTS DFNB4 PRO-227 AND CYS-556</scope>
</reference>
<feature type="chain" id="PRO_0000080164" description="Pendrin">
    <location>
        <begin position="1"/>
        <end position="780"/>
    </location>
</feature>
<feature type="topological domain" description="Cytoplasmic" evidence="2">
    <location>
        <begin position="1"/>
        <end position="87"/>
    </location>
</feature>
<feature type="transmembrane region" description="Helical" evidence="2">
    <location>
        <begin position="88"/>
        <end position="108"/>
    </location>
</feature>
<feature type="topological domain" description="Extracellular" evidence="2">
    <location>
        <position position="109"/>
    </location>
</feature>
<feature type="transmembrane region" description="Helical" evidence="2">
    <location>
        <begin position="110"/>
        <end position="130"/>
    </location>
</feature>
<feature type="topological domain" description="Cytoplasmic" evidence="2">
    <location>
        <begin position="131"/>
        <end position="135"/>
    </location>
</feature>
<feature type="transmembrane region" description="Helical" evidence="2">
    <location>
        <begin position="136"/>
        <end position="156"/>
    </location>
</feature>
<feature type="topological domain" description="Extracellular" evidence="2">
    <location>
        <begin position="157"/>
        <end position="191"/>
    </location>
</feature>
<feature type="transmembrane region" description="Helical" evidence="2">
    <location>
        <begin position="192"/>
        <end position="212"/>
    </location>
</feature>
<feature type="topological domain" description="Cytoplasmic" evidence="2">
    <location>
        <begin position="213"/>
        <end position="218"/>
    </location>
</feature>
<feature type="transmembrane region" description="Helical" evidence="2">
    <location>
        <begin position="219"/>
        <end position="239"/>
    </location>
</feature>
<feature type="topological domain" description="Extracellular" evidence="2">
    <location>
        <begin position="240"/>
        <end position="263"/>
    </location>
</feature>
<feature type="transmembrane region" description="Helical" evidence="2">
    <location>
        <begin position="264"/>
        <end position="284"/>
    </location>
</feature>
<feature type="topological domain" description="Cytoplasmic" evidence="2">
    <location>
        <begin position="285"/>
        <end position="295"/>
    </location>
</feature>
<feature type="transmembrane region" description="Helical" evidence="2">
    <location>
        <begin position="296"/>
        <end position="316"/>
    </location>
</feature>
<feature type="topological domain" description="Extracellular" evidence="2">
    <location>
        <begin position="317"/>
        <end position="344"/>
    </location>
</feature>
<feature type="transmembrane region" description="Helical" evidence="2">
    <location>
        <begin position="345"/>
        <end position="365"/>
    </location>
</feature>
<feature type="topological domain" description="Cytoplasmic" evidence="2">
    <location>
        <begin position="366"/>
        <end position="384"/>
    </location>
</feature>
<feature type="transmembrane region" description="Helical" evidence="2">
    <location>
        <begin position="385"/>
        <end position="405"/>
    </location>
</feature>
<feature type="topological domain" description="Extracellular" evidence="2">
    <location>
        <begin position="406"/>
        <end position="421"/>
    </location>
</feature>
<feature type="transmembrane region" description="Helical" evidence="2">
    <location>
        <begin position="422"/>
        <end position="442"/>
    </location>
</feature>
<feature type="topological domain" description="Cytoplasmic" evidence="2">
    <location>
        <begin position="443"/>
        <end position="448"/>
    </location>
</feature>
<feature type="transmembrane region" description="Helical" evidence="2">
    <location>
        <begin position="449"/>
        <end position="469"/>
    </location>
</feature>
<feature type="topological domain" description="Extracellular" evidence="2">
    <location>
        <begin position="470"/>
        <end position="486"/>
    </location>
</feature>
<feature type="transmembrane region" description="Helical" evidence="2">
    <location>
        <begin position="487"/>
        <end position="507"/>
    </location>
</feature>
<feature type="topological domain" description="Cytoplasmic" evidence="2">
    <location>
        <begin position="508"/>
        <end position="780"/>
    </location>
</feature>
<feature type="domain" description="STAS" evidence="3">
    <location>
        <begin position="535"/>
        <end position="729"/>
    </location>
</feature>
<feature type="splice variant" id="VSP_056688" description="In isoform 2." evidence="40">
    <location>
        <begin position="1"/>
        <end position="431"/>
    </location>
</feature>
<feature type="sequence variant" id="VAR_064988" description="In dbSNP:rs111033423." evidence="31">
    <original>G</original>
    <variation>V</variation>
    <location>
        <position position="6"/>
    </location>
</feature>
<feature type="sequence variant" id="VAR_021638" description="In PDS/DFNB4; dbSNP:rs1268256689." evidence="22">
    <original>R</original>
    <variation>G</variation>
    <location>
        <position position="24"/>
    </location>
</feature>
<feature type="sequence variant" id="VAR_021639" description="In PDS and DFNB4; dbSNP:rs539699299." evidence="15 18">
    <original>S</original>
    <variation>R</variation>
    <location>
        <position position="28"/>
    </location>
</feature>
<feature type="sequence variant" id="VAR_021640" description="In PDS; dbSNP:rs111033205." evidence="12 22 24">
    <original>E</original>
    <variation>Q</variation>
    <location>
        <position position="29"/>
    </location>
</feature>
<feature type="sequence variant" id="VAR_021641" description="In PDS; dbSNP:rs2129309178." evidence="22 24">
    <original>Y</original>
    <variation>C</variation>
    <location>
        <position position="78"/>
    </location>
</feature>
<feature type="sequence variant" id="VAR_021642" description="In DFNB4; dbSNP:rs370588279." evidence="18">
    <original>S</original>
    <variation>L</variation>
    <location>
        <position position="90"/>
    </location>
</feature>
<feature type="sequence variant" id="VAR_064989" description="In dbSNP:rs141142414." evidence="28">
    <original>T</original>
    <variation>M</variation>
    <location>
        <position position="99"/>
    </location>
</feature>
<feature type="sequence variant" id="VAR_021643" description="In PDS; fails to localize to cell membrane; abolishes iodide transport; dbSNP:rs1219724284." evidence="16">
    <original>G</original>
    <variation>R</variation>
    <location>
        <position position="102"/>
    </location>
</feature>
<feature type="sequence variant" id="VAR_021644" description="In PDS/DFNB4; dbSNP:rs1203167658." evidence="22">
    <original>A</original>
    <variation>V</variation>
    <location>
        <position position="104"/>
    </location>
</feature>
<feature type="sequence variant" id="VAR_021645" description="In PDS; dbSNP:rs1442599990." evidence="12 22">
    <original>Y</original>
    <variation>C</variation>
    <location>
        <position position="105"/>
    </location>
</feature>
<feature type="sequence variant" id="VAR_021646" description="In PDS; dbSNP:rs1562822565." evidence="12 22">
    <original>A</original>
    <variation>D</variation>
    <location>
        <position position="106"/>
    </location>
</feature>
<feature type="sequence variant" id="VAR_021647" description="In DFNB4 and PDS; does not affect protein localization to cell membrane; does not affect iodide transport; dbSNP:rs145254330." evidence="8 16">
    <original>L</original>
    <variation>F</variation>
    <location>
        <position position="117"/>
    </location>
</feature>
<feature type="sequence variant" id="VAR_027238" description="In DFNB4; dbSNP:rs984967571." evidence="21">
    <original>P</original>
    <variation>S</variation>
    <location>
        <position position="123"/>
    </location>
</feature>
<feature type="sequence variant" id="VAR_021648" description="In DFNB4; dbSNP:rs1554354370." evidence="14">
    <original>T</original>
    <variation>I</variation>
    <location>
        <position position="132"/>
    </location>
</feature>
<feature type="sequence variant" id="VAR_021649" description="In PDS; dbSNP:rs121908365." evidence="15 19">
    <original>S</original>
    <variation>T</variation>
    <location>
        <position position="133"/>
    </location>
</feature>
<feature type="sequence variant" id="VAR_021650" description="In PDS; dbSNP:rs1554354382." evidence="24">
    <original>S</original>
    <variation>P</variation>
    <location>
        <position position="137"/>
    </location>
</feature>
<feature type="sequence variant" id="VAR_021651" description="In PDS; fails to localize to cell membrane; abolishes iodide transport; dbSNP:rs111033199." evidence="12 13 16 19 22 24 29 38 39">
    <original>V</original>
    <variation>F</variation>
    <location>
        <position position="138"/>
    </location>
</feature>
<feature type="sequence variant" id="VAR_021652" description="In PDS; dbSNP:rs756272252." evidence="22 38">
    <original>G</original>
    <variation>A</variation>
    <location>
        <position position="139"/>
    </location>
</feature>
<feature type="sequence variant" id="VAR_064990" description="Found in a patient with non-syndromic deafness; uncertain significance; dbSNP:rs772023020." evidence="31">
    <original>V</original>
    <variation>A</variation>
    <location>
        <position position="144"/>
    </location>
</feature>
<feature type="sequence variant" id="VAR_027239" description="In DFNB4; dbSNP:rs760413427." evidence="21">
    <original>M</original>
    <variation>V</variation>
    <location>
        <position position="147"/>
    </location>
</feature>
<feature type="sequence variant" id="VAR_064991" description="In DFNB4; likely pathogenic; loss of cell membrane localization; loss of chloride transport, chloride-bicarbonate exchanger and chloride-iodide exchanger activities; dbSNP:rs542620119." evidence="31 32">
    <original>R</original>
    <variation>T</variation>
    <location>
        <position position="185"/>
    </location>
</feature>
<feature type="sequence variant" id="VAR_011623" description="In PDS; dbSNP:rs111033348." evidence="10 24">
    <original>T</original>
    <variation>I</variation>
    <location>
        <position position="193"/>
    </location>
</feature>
<feature type="sequence variant" id="VAR_007440" description="In DFNB4 and PDS; severely reduces iodide transport without affecting protein localization to cell membrane; dbSNP:rs111033303." evidence="4 8 12 16 22 24 29 38">
    <original>G</original>
    <variation>V</variation>
    <location>
        <position position="209"/>
    </location>
</feature>
<feature type="sequence variant" id="VAR_079503" description="In DFNB4." evidence="34">
    <original>A</original>
    <variation>P</variation>
    <location>
        <position position="227"/>
    </location>
</feature>
<feature type="sequence variant" id="VAR_007441" description="In PDS and DFNB4; common mutation; fails to localize to cell membrane; abolishes iodide transport; dbSNP:rs80338848." evidence="8 12 16 22 24 29 38 39">
    <original>L</original>
    <variation>P</variation>
    <location>
        <position position="236"/>
    </location>
</feature>
<feature type="sequence variant" id="VAR_021653" description="In PDS and DFNB4; dbSNP:rs111033256." evidence="18 20">
    <original>V</original>
    <variation>D</variation>
    <location>
        <position position="239"/>
    </location>
</feature>
<feature type="sequence variant" id="VAR_021654" description="In DFNB4; dbSNP:rs1315422549." evidence="18">
    <original>S</original>
    <variation>P</variation>
    <location>
        <position position="252"/>
    </location>
</feature>
<feature type="sequence variant" id="VAR_021655" description="In PDS." evidence="22 38">
    <original>D</original>
    <variation>H</variation>
    <location>
        <position position="271"/>
    </location>
</feature>
<feature type="sequence variant" id="VAR_064992" description="In DFNB4; dbSNP:rs727505080." evidence="31">
    <original>V</original>
    <variation>I</variation>
    <location>
        <position position="281"/>
    </location>
</feature>
<feature type="sequence variant" id="VAR_053663" description="In dbSNP:rs34373141.">
    <original>P</original>
    <variation>L</variation>
    <location>
        <position position="301"/>
    </location>
</feature>
<feature type="sequence variant" id="VAR_053664" description="In dbSNP:rs36039758." evidence="22">
    <original>N</original>
    <variation>Y</variation>
    <location>
        <position position="324"/>
    </location>
</feature>
<feature type="sequence variant" id="VAR_021656" description="In PDS and DFNB4; dbSNP:rs111033212." evidence="12 22 29 32">
    <original>F</original>
    <variation>L</variation>
    <location>
        <position position="335"/>
    </location>
</feature>
<feature type="sequence variant" id="VAR_007442" description="In DFNB4; dbSNP:rs121908361." evidence="4">
    <original>K</original>
    <variation>E</variation>
    <location>
        <position position="369"/>
    </location>
</feature>
<feature type="sequence variant" id="VAR_007443" description="In DFNB4; dbSNP:rs121908364." evidence="4">
    <original>A</original>
    <variation>V</variation>
    <location>
        <position position="372"/>
    </location>
</feature>
<feature type="sequence variant" id="VAR_007444" description="In PDS; uncertain significance; also found at heterozygosity in a patient with hearing loss and unilateral enlargement of the vestibular aqueduct; uncertain significance; dbSNP:rs111033244." evidence="19 22 29 32 39">
    <original>E</original>
    <variation>G</variation>
    <location>
        <position position="384"/>
    </location>
</feature>
<feature type="sequence variant" id="VAR_021657" description="In PDS; dbSNP:rs1791526110." evidence="24">
    <original>S</original>
    <variation>N</variation>
    <location>
        <position position="391"/>
    </location>
</feature>
<feature type="sequence variant" id="VAR_021658" description="In DFNB4; dbSNP:rs201562855." evidence="18">
    <original>N</original>
    <variation>Y</variation>
    <location>
        <position position="392"/>
    </location>
</feature>
<feature type="sequence variant" id="VAR_058580" description="In PDS and DFNB4; dbSNP:rs397516414." evidence="29">
    <original>V</original>
    <variation>M</variation>
    <location>
        <position position="402"/>
    </location>
</feature>
<feature type="sequence variant" id="VAR_021659" description="In PDS; dbSNP:rs111033305." evidence="15 22 24 38 39">
    <original>R</original>
    <variation>H</variation>
    <location>
        <position position="409"/>
    </location>
</feature>
<feature type="sequence variant" id="VAR_021660" description="In DFNB4; dbSNP:rs111033305." evidence="18">
    <original>R</original>
    <variation>P</variation>
    <location>
        <position position="409"/>
    </location>
</feature>
<feature type="sequence variant" id="VAR_021661" description="In DFNB4 and PDS; fails to localize to cell membrane; abolishes iodide transport; dbSNP:rs111033220." evidence="8 14 15 16 18 22 24 39">
    <original>T</original>
    <variation>M</variation>
    <location>
        <position position="410"/>
    </location>
</feature>
<feature type="sequence variant" id="VAR_021662" description="In PDS; dbSNP:rs1293971731." evidence="13">
    <original>A</original>
    <variation>P</variation>
    <location>
        <position position="411"/>
    </location>
</feature>
<feature type="sequence variant" id="VAR_007445" description="In PDS and DFNB4; common mutation; dbSNP:rs28939086." evidence="8 12 22 24 25 29 38 39">
    <original>T</original>
    <variation>P</variation>
    <location>
        <position position="416"/>
    </location>
</feature>
<feature type="sequence variant" id="VAR_021663" description="In PDS/DFNB4; uncertain significance; dbSNP:rs201660407." evidence="22">
    <original>Q</original>
    <variation>R</variation>
    <location>
        <position position="421"/>
    </location>
</feature>
<feature type="sequence variant" id="VAR_021664" description="In PDS/DFNB4; uncertain significance." evidence="22">
    <location>
        <position position="429"/>
    </location>
</feature>
<feature type="sequence variant" id="VAR_011624" description="In PDS and DFNB4; uncertain significance; also found at heterozygosity in a patient with hearing loss and unilateral enlargement of the vestibular aqueduct; uncertain significance; dbSNP:rs111033307." evidence="6 8 14 22 24 29 32 38">
    <original>L</original>
    <variation>W</variation>
    <location>
        <position position="445"/>
    </location>
</feature>
<feature type="sequence variant" id="VAR_021665" description="In DFNB4 and PDS; fails to localize to cell membrane; abolishes iodide transport; dbSNP:rs768471577." evidence="8 16">
    <original>Q</original>
    <variation>R</variation>
    <location>
        <position position="446"/>
    </location>
</feature>
<feature type="sequence variant" id="VAR_021666" description="In dbSNP:rs375576481." evidence="18 33">
    <original>I</original>
    <variation>F</variation>
    <location>
        <position position="455"/>
    </location>
</feature>
<feature type="sequence variant" id="VAR_021667" description="In DFNB4; dbSNP:rs1554359670." evidence="18">
    <original>N</original>
    <variation>K</variation>
    <location>
        <position position="457"/>
    </location>
</feature>
<feature type="sequence variant" id="VAR_021668" description="In PDS; retains residual transport function; dbSNP:rs1314376649." evidence="12 22">
    <original>V</original>
    <variation>D</variation>
    <location>
        <position position="480"/>
    </location>
</feature>
<feature type="sequence variant" id="VAR_021669" description="In DFNB4; dbSNP:rs200511789." evidence="37">
    <original>I</original>
    <variation>L</variation>
    <location>
        <position position="490"/>
    </location>
</feature>
<feature type="sequence variant" id="VAR_007446" description="In DFNB4; dbSNP:rs111033308." evidence="37">
    <original>G</original>
    <variation>S</variation>
    <location>
        <position position="497"/>
    </location>
</feature>
<feature type="sequence variant" id="VAR_027240" description="In PDS." evidence="9">
    <original>T</original>
    <variation>N</variation>
    <location>
        <position position="508"/>
    </location>
</feature>
<feature type="sequence variant" id="VAR_027241" description="In PDS; dbSNP:rs111033316." evidence="26 29">
    <original>Q</original>
    <variation>R</variation>
    <location>
        <position position="514"/>
    </location>
</feature>
<feature type="sequence variant" id="VAR_021670" description="In PDS; dbSNP:rs111033254." evidence="12 19 22 24 29 39">
    <original>Y</original>
    <variation>H</variation>
    <location>
        <position position="530"/>
    </location>
</feature>
<feature type="sequence variant" id="VAR_027242" description="In PDS and DFNB4; dbSNP:rs747636919." evidence="26 29">
    <original>Y</original>
    <variation>S</variation>
    <location>
        <position position="530"/>
    </location>
</feature>
<feature type="sequence variant" id="VAR_021671" description="In PDS." evidence="24">
    <original>S</original>
    <variation>I</variation>
    <location>
        <position position="552"/>
    </location>
</feature>
<feature type="sequence variant" id="VAR_021672" description="In PDS and DFNB4; partially affects protein localization to cell membrane; abolishes iodide transport; dbSNP:rs763006761." evidence="16 22 34 39">
    <original>Y</original>
    <variation>C</variation>
    <location>
        <position position="556"/>
    </location>
</feature>
<feature type="sequence variant" id="VAR_021673" description="In PDS." evidence="14">
    <original>Y</original>
    <variation>H</variation>
    <location>
        <position position="556"/>
    </location>
</feature>
<feature type="sequence variant" id="VAR_064993" description="In DFNB4." evidence="30">
    <original>N</original>
    <variation>K</variation>
    <location>
        <position position="558"/>
    </location>
</feature>
<feature type="sequence variant" id="VAR_021674" description="In PDS; dbSNP:rs111033257." evidence="22 29 38">
    <original>C</original>
    <variation>Y</variation>
    <location>
        <position position="565"/>
    </location>
</feature>
<feature type="sequence variant" id="VAR_021675" description="In dbSNP:rs55638457." evidence="12 15 22 24 29 31 32">
    <original>L</original>
    <variation>S</variation>
    <location>
        <position position="597"/>
    </location>
</feature>
<feature type="sequence variant" id="VAR_027243" description="In dbSNP:rs17154335." evidence="26 29">
    <original>V</original>
    <variation>G</variation>
    <location>
        <position position="609"/>
    </location>
</feature>
<feature type="sequence variant" id="VAR_021676" description="In PDS; retains residual transport function; dbSNP:rs1554361015." evidence="12 22">
    <original>V</original>
    <variation>A</variation>
    <location>
        <position position="653"/>
    </location>
</feature>
<feature type="sequence variant" id="VAR_027244" description="In DFNB4; dbSNP:rs1584337274." evidence="21">
    <original>S</original>
    <variation>F</variation>
    <location>
        <position position="666"/>
    </location>
</feature>
<feature type="sequence variant" id="VAR_007447" description="In PDS; dbSNP:rs121908360." evidence="36">
    <original>F</original>
    <variation>C</variation>
    <location>
        <position position="667"/>
    </location>
</feature>
<feature type="sequence variant" id="VAR_021677" description="In PDS; partially affects protein localization to cell membrane; abolishes iodide transport; dbSNP:rs111033309." evidence="12 16 22 39">
    <original>G</original>
    <variation>E</variation>
    <location>
        <position position="672"/>
    </location>
</feature>
<feature type="sequence variant" id="VAR_021678" description="In DFNB4; dbSNP:rs111033318." evidence="18">
    <original>L</original>
    <variation>Q</variation>
    <location>
        <position position="676"/>
    </location>
</feature>
<feature type="sequence variant" id="VAR_021679" description="In PDS/DFNB4; dbSNP:rs1060499808." evidence="22">
    <original>F</original>
    <variation>S</variation>
    <location>
        <position position="683"/>
    </location>
</feature>
<feature type="sequence variant" id="VAR_053665" description="In dbSNP:rs35548413.">
    <original>D</original>
    <variation>Y</variation>
    <location>
        <position position="687"/>
    </location>
</feature>
<feature type="sequence variant" id="VAR_021680" description="In PDS; dbSNP:rs981410021." evidence="24">
    <original>S</original>
    <variation>P</variation>
    <location>
        <position position="694"/>
    </location>
</feature>
<feature type="sequence variant" id="VAR_007448" description="In DFNB4 and PDS; dbSNP:rs121908363." evidence="4 14 18 24">
    <original>T</original>
    <variation>M</variation>
    <location>
        <position position="721"/>
    </location>
</feature>
<feature type="sequence variant" id="VAR_007449" description="In DFNB4 and PDS; common mutation in Korea and Japan; dbSNP:rs121908362." evidence="4 18 20 22 38">
    <original>H</original>
    <variation>R</variation>
    <location>
        <position position="723"/>
    </location>
</feature>
<feature type="sequence variant" id="VAR_021681" description="In PDS; dbSNP:rs994170964." evidence="24">
    <original>D</original>
    <variation>N</variation>
    <location>
        <position position="724"/>
    </location>
</feature>
<feature type="sequence variant" id="VAR_027245" description="In dbSNP:rs17154353.">
    <original>G</original>
    <variation>S</variation>
    <location>
        <position position="740"/>
    </location>
</feature>
<feature type="sequence variant" id="VAR_058581" description="In PDS and DFNB4; dbSNP:rs1562845849." evidence="29 32">
    <original>M</original>
    <variation>T</variation>
    <location>
        <position position="775"/>
    </location>
</feature>
<feature type="sequence variant" id="VAR_027246" description="Retains its ability to transport iodide in vitro; dbSNP:rs111033255." evidence="26 27 29 32">
    <original>R</original>
    <variation>C</variation>
    <location>
        <position position="776"/>
    </location>
</feature>
<name>S26A4_HUMAN</name>
<gene>
    <name type="primary">SLC26A4</name>
    <name type="synonym">PDS</name>
</gene>
<dbReference type="EMBL" id="AF030880">
    <property type="protein sequence ID" value="AAC51873.1"/>
    <property type="molecule type" value="mRNA"/>
</dbReference>
<dbReference type="EMBL" id="AK294388">
    <property type="protein sequence ID" value="BAH11752.1"/>
    <property type="molecule type" value="mRNA"/>
</dbReference>
<dbReference type="EMBL" id="AC002467">
    <property type="protein sequence ID" value="AAB88773.2"/>
    <property type="molecule type" value="Genomic_DNA"/>
</dbReference>
<dbReference type="EMBL" id="AC078937">
    <property type="status" value="NOT_ANNOTATED_CDS"/>
    <property type="molecule type" value="Genomic_DNA"/>
</dbReference>
<dbReference type="CCDS" id="CCDS5746.1">
    <molecule id="O43511-1"/>
</dbReference>
<dbReference type="RefSeq" id="NP_000432.1">
    <molecule id="O43511-1"/>
    <property type="nucleotide sequence ID" value="NM_000441.2"/>
</dbReference>
<dbReference type="RefSeq" id="XP_005250482.1">
    <property type="nucleotide sequence ID" value="XM_005250425.2"/>
</dbReference>
<dbReference type="EMDB" id="EMD-31757"/>
<dbReference type="EMDB" id="EMD-31758"/>
<dbReference type="EMDB" id="EMD-31759"/>
<dbReference type="SMR" id="O43511"/>
<dbReference type="BioGRID" id="111198">
    <property type="interactions" value="106"/>
</dbReference>
<dbReference type="FunCoup" id="O43511">
    <property type="interactions" value="175"/>
</dbReference>
<dbReference type="IntAct" id="O43511">
    <property type="interactions" value="12"/>
</dbReference>
<dbReference type="STRING" id="9606.ENSP00000494017"/>
<dbReference type="BindingDB" id="O43511"/>
<dbReference type="ChEMBL" id="CHEMBL4523138"/>
<dbReference type="DrugBank" id="DB05382">
    <property type="generic name" value="Iodine"/>
</dbReference>
<dbReference type="TCDB" id="2.A.53.2.17">
    <property type="family name" value="the sulfate permease (sulp) family"/>
</dbReference>
<dbReference type="GlyGen" id="O43511">
    <property type="glycosylation" value="1 site, 1 O-linked glycan (1 site)"/>
</dbReference>
<dbReference type="iPTMnet" id="O43511"/>
<dbReference type="PhosphoSitePlus" id="O43511"/>
<dbReference type="BioMuta" id="SLC26A4"/>
<dbReference type="MassIVE" id="O43511"/>
<dbReference type="PaxDb" id="9606-ENSP00000265715"/>
<dbReference type="PeptideAtlas" id="O43511"/>
<dbReference type="ProteomicsDB" id="49001">
    <molecule id="O43511-1"/>
</dbReference>
<dbReference type="ProteomicsDB" id="6414"/>
<dbReference type="Antibodypedia" id="31372">
    <property type="antibodies" value="148 antibodies from 24 providers"/>
</dbReference>
<dbReference type="DNASU" id="5172"/>
<dbReference type="Ensembl" id="ENST00000644269.2">
    <molecule id="O43511-1"/>
    <property type="protein sequence ID" value="ENSP00000494017.1"/>
    <property type="gene ID" value="ENSG00000091137.14"/>
</dbReference>
<dbReference type="GeneID" id="5172"/>
<dbReference type="KEGG" id="hsa:5172"/>
<dbReference type="MANE-Select" id="ENST00000644269.2">
    <property type="protein sequence ID" value="ENSP00000494017.1"/>
    <property type="RefSeq nucleotide sequence ID" value="NM_000441.2"/>
    <property type="RefSeq protein sequence ID" value="NP_000432.1"/>
</dbReference>
<dbReference type="UCSC" id="uc003vep.4">
    <molecule id="O43511-1"/>
    <property type="organism name" value="human"/>
</dbReference>
<dbReference type="AGR" id="HGNC:8818"/>
<dbReference type="CTD" id="5172"/>
<dbReference type="DisGeNET" id="5172"/>
<dbReference type="GeneCards" id="SLC26A4"/>
<dbReference type="GeneReviews" id="SLC26A4"/>
<dbReference type="HGNC" id="HGNC:8818">
    <property type="gene designation" value="SLC26A4"/>
</dbReference>
<dbReference type="HPA" id="ENSG00000091137">
    <property type="expression patterns" value="Tissue enriched (thyroid)"/>
</dbReference>
<dbReference type="MalaCards" id="SLC26A4"/>
<dbReference type="MIM" id="274600">
    <property type="type" value="phenotype"/>
</dbReference>
<dbReference type="MIM" id="600791">
    <property type="type" value="phenotype"/>
</dbReference>
<dbReference type="MIM" id="605646">
    <property type="type" value="gene"/>
</dbReference>
<dbReference type="neXtProt" id="NX_O43511"/>
<dbReference type="OpenTargets" id="ENSG00000091137"/>
<dbReference type="Orphanet" id="95713">
    <property type="disease" value="Athyreosis"/>
</dbReference>
<dbReference type="Orphanet" id="705">
    <property type="disease" value="Pendred syndrome"/>
</dbReference>
<dbReference type="Orphanet" id="90636">
    <property type="disease" value="Rare autosomal recessive non-syndromic sensorineural deafness type DFNB"/>
</dbReference>
<dbReference type="Orphanet" id="95720">
    <property type="disease" value="Thyroid hypoplasia"/>
</dbReference>
<dbReference type="PharmGKB" id="PA35506"/>
<dbReference type="VEuPathDB" id="HostDB:ENSG00000091137"/>
<dbReference type="eggNOG" id="KOG0236">
    <property type="taxonomic scope" value="Eukaryota"/>
</dbReference>
<dbReference type="GeneTree" id="ENSGT01070000253775"/>
<dbReference type="HOGENOM" id="CLU_003182_9_4_1"/>
<dbReference type="InParanoid" id="O43511"/>
<dbReference type="OMA" id="IVCMAVK"/>
<dbReference type="OrthoDB" id="288203at2759"/>
<dbReference type="PAN-GO" id="O43511">
    <property type="GO annotations" value="6 GO annotations based on evolutionary models"/>
</dbReference>
<dbReference type="PhylomeDB" id="O43511"/>
<dbReference type="TreeFam" id="TF313784"/>
<dbReference type="PathwayCommons" id="O43511"/>
<dbReference type="Reactome" id="R-HSA-427601">
    <property type="pathway name" value="Multifunctional anion exchangers"/>
</dbReference>
<dbReference type="Reactome" id="R-HSA-5619046">
    <property type="pathway name" value="Defective SLC26A4 causes Pendred syndrome (PDS)"/>
</dbReference>
<dbReference type="SignaLink" id="O43511"/>
<dbReference type="SIGNOR" id="O43511"/>
<dbReference type="BioGRID-ORCS" id="5172">
    <property type="hits" value="13 hits in 1157 CRISPR screens"/>
</dbReference>
<dbReference type="GeneWiki" id="Pendrin"/>
<dbReference type="GenomeRNAi" id="5172"/>
<dbReference type="Pharos" id="O43511">
    <property type="development level" value="Tbio"/>
</dbReference>
<dbReference type="PRO" id="PR:O43511"/>
<dbReference type="Proteomes" id="UP000005640">
    <property type="component" value="Chromosome 7"/>
</dbReference>
<dbReference type="RNAct" id="O43511">
    <property type="molecule type" value="protein"/>
</dbReference>
<dbReference type="Bgee" id="ENSG00000091137">
    <property type="expression patterns" value="Expressed in palpebral conjunctiva and 124 other cell types or tissues"/>
</dbReference>
<dbReference type="ExpressionAtlas" id="O43511">
    <property type="expression patterns" value="baseline and differential"/>
</dbReference>
<dbReference type="GO" id="GO:0016324">
    <property type="term" value="C:apical plasma membrane"/>
    <property type="evidence" value="ECO:0000314"/>
    <property type="project" value="UniProtKB"/>
</dbReference>
<dbReference type="GO" id="GO:0031526">
    <property type="term" value="C:brush border membrane"/>
    <property type="evidence" value="ECO:0000250"/>
    <property type="project" value="UniProtKB"/>
</dbReference>
<dbReference type="GO" id="GO:0070062">
    <property type="term" value="C:extracellular exosome"/>
    <property type="evidence" value="ECO:0000314"/>
    <property type="project" value="UniProtKB"/>
</dbReference>
<dbReference type="GO" id="GO:0016020">
    <property type="term" value="C:membrane"/>
    <property type="evidence" value="ECO:0000304"/>
    <property type="project" value="ProtInc"/>
</dbReference>
<dbReference type="GO" id="GO:0005886">
    <property type="term" value="C:plasma membrane"/>
    <property type="evidence" value="ECO:0000315"/>
    <property type="project" value="UniProtKB"/>
</dbReference>
<dbReference type="GO" id="GO:0015106">
    <property type="term" value="F:bicarbonate transmembrane transporter activity"/>
    <property type="evidence" value="ECO:0000318"/>
    <property type="project" value="GO_Central"/>
</dbReference>
<dbReference type="GO" id="GO:0015108">
    <property type="term" value="F:chloride transmembrane transporter activity"/>
    <property type="evidence" value="ECO:0000314"/>
    <property type="project" value="UniProtKB"/>
</dbReference>
<dbReference type="GO" id="GO:0140900">
    <property type="term" value="F:chloride:bicarbonate antiporter activity"/>
    <property type="evidence" value="ECO:0000314"/>
    <property type="project" value="UniProtKB"/>
</dbReference>
<dbReference type="GO" id="GO:0015111">
    <property type="term" value="F:iodide transmembrane transporter activity"/>
    <property type="evidence" value="ECO:0000314"/>
    <property type="project" value="UniProtKB"/>
</dbReference>
<dbReference type="GO" id="GO:0019531">
    <property type="term" value="F:oxalate transmembrane transporter activity"/>
    <property type="evidence" value="ECO:0000318"/>
    <property type="project" value="GO_Central"/>
</dbReference>
<dbReference type="GO" id="GO:0008271">
    <property type="term" value="F:secondary active sulfate transmembrane transporter activity"/>
    <property type="evidence" value="ECO:0007669"/>
    <property type="project" value="InterPro"/>
</dbReference>
<dbReference type="GO" id="GO:0015116">
    <property type="term" value="F:sulfate transmembrane transporter activity"/>
    <property type="evidence" value="ECO:0000318"/>
    <property type="project" value="GO_Central"/>
</dbReference>
<dbReference type="GO" id="GO:1902476">
    <property type="term" value="P:chloride transmembrane transport"/>
    <property type="evidence" value="ECO:0000318"/>
    <property type="project" value="GO_Central"/>
</dbReference>
<dbReference type="GO" id="GO:0015698">
    <property type="term" value="P:inorganic anion transport"/>
    <property type="evidence" value="ECO:0000304"/>
    <property type="project" value="ProtInc"/>
</dbReference>
<dbReference type="GO" id="GO:0015705">
    <property type="term" value="P:iodide transport"/>
    <property type="evidence" value="ECO:0000315"/>
    <property type="project" value="UniProtKB"/>
</dbReference>
<dbReference type="GO" id="GO:0006811">
    <property type="term" value="P:monoatomic ion transport"/>
    <property type="evidence" value="ECO:0000304"/>
    <property type="project" value="Reactome"/>
</dbReference>
<dbReference type="GO" id="GO:0006885">
    <property type="term" value="P:regulation of pH"/>
    <property type="evidence" value="ECO:0000250"/>
    <property type="project" value="UniProtKB"/>
</dbReference>
<dbReference type="GO" id="GO:0032880">
    <property type="term" value="P:regulation of protein localization"/>
    <property type="evidence" value="ECO:0000250"/>
    <property type="project" value="UniProtKB"/>
</dbReference>
<dbReference type="GO" id="GO:0007605">
    <property type="term" value="P:sensory perception of sound"/>
    <property type="evidence" value="ECO:0000304"/>
    <property type="project" value="ProtInc"/>
</dbReference>
<dbReference type="GO" id="GO:1902358">
    <property type="term" value="P:sulfate transmembrane transport"/>
    <property type="evidence" value="ECO:0000318"/>
    <property type="project" value="GO_Central"/>
</dbReference>
<dbReference type="CDD" id="cd07042">
    <property type="entry name" value="STAS_SulP_like_sulfate_transporter"/>
    <property type="match status" value="1"/>
</dbReference>
<dbReference type="Gene3D" id="3.30.750.24">
    <property type="entry name" value="STAS domain"/>
    <property type="match status" value="1"/>
</dbReference>
<dbReference type="InterPro" id="IPR018045">
    <property type="entry name" value="S04_transporter_CS"/>
</dbReference>
<dbReference type="InterPro" id="IPR011547">
    <property type="entry name" value="SLC26A/SulP_dom"/>
</dbReference>
<dbReference type="InterPro" id="IPR001902">
    <property type="entry name" value="SLC26A/SulP_fam"/>
</dbReference>
<dbReference type="InterPro" id="IPR002645">
    <property type="entry name" value="STAS_dom"/>
</dbReference>
<dbReference type="InterPro" id="IPR036513">
    <property type="entry name" value="STAS_dom_sf"/>
</dbReference>
<dbReference type="NCBIfam" id="TIGR00815">
    <property type="entry name" value="sulP"/>
    <property type="match status" value="1"/>
</dbReference>
<dbReference type="PANTHER" id="PTHR11814">
    <property type="entry name" value="SULFATE TRANSPORTER"/>
    <property type="match status" value="1"/>
</dbReference>
<dbReference type="Pfam" id="PF01740">
    <property type="entry name" value="STAS"/>
    <property type="match status" value="1"/>
</dbReference>
<dbReference type="Pfam" id="PF00916">
    <property type="entry name" value="Sulfate_transp"/>
    <property type="match status" value="1"/>
</dbReference>
<dbReference type="SUPFAM" id="SSF52091">
    <property type="entry name" value="SpoIIaa-like"/>
    <property type="match status" value="1"/>
</dbReference>
<dbReference type="PROSITE" id="PS01130">
    <property type="entry name" value="SLC26A"/>
    <property type="match status" value="1"/>
</dbReference>
<dbReference type="PROSITE" id="PS50801">
    <property type="entry name" value="STAS"/>
    <property type="match status" value="1"/>
</dbReference>
<accession>O43511</accession>
<accession>B7Z266</accession>
<accession>O43170</accession>
<organism>
    <name type="scientific">Homo sapiens</name>
    <name type="common">Human</name>
    <dbReference type="NCBI Taxonomy" id="9606"/>
    <lineage>
        <taxon>Eukaryota</taxon>
        <taxon>Metazoa</taxon>
        <taxon>Chordata</taxon>
        <taxon>Craniata</taxon>
        <taxon>Vertebrata</taxon>
        <taxon>Euteleostomi</taxon>
        <taxon>Mammalia</taxon>
        <taxon>Eutheria</taxon>
        <taxon>Euarchontoglires</taxon>
        <taxon>Primates</taxon>
        <taxon>Haplorrhini</taxon>
        <taxon>Catarrhini</taxon>
        <taxon>Hominidae</taxon>
        <taxon>Homo</taxon>
    </lineage>
</organism>
<comment type="function">
    <text evidence="1 5 7 16 17 23 27 32 35">Sodium-independent transporter of chloride and iodide (PubMed:10192399, PubMed:11932316, PubMed:12107249, PubMed:16684826, PubMed:24051746). Mediates electroneutral chloride-bicarbonate, chloride-iodide and chloride-formate exchange with 1:1 stoichiometry (PubMed:10644529, PubMed:15155570, PubMed:24051746, PubMed:35601831). Mediates electroneutral iodide-bicarbonate exchange (By similarity).</text>
</comment>
<comment type="catalytic activity">
    <reaction evidence="5 32">
        <text>chloride(in) = chloride(out)</text>
        <dbReference type="Rhea" id="RHEA:29823"/>
        <dbReference type="ChEBI" id="CHEBI:17996"/>
    </reaction>
    <physiologicalReaction direction="right-to-left" evidence="42">
        <dbReference type="Rhea" id="RHEA:29825"/>
    </physiologicalReaction>
</comment>
<comment type="catalytic activity">
    <reaction evidence="5 16 17 27">
        <text>iodide(out) = iodide(in)</text>
        <dbReference type="Rhea" id="RHEA:66324"/>
        <dbReference type="ChEBI" id="CHEBI:16382"/>
    </reaction>
    <physiologicalReaction direction="left-to-right" evidence="43">
        <dbReference type="Rhea" id="RHEA:66325"/>
    </physiologicalReaction>
    <physiologicalReaction direction="right-to-left" evidence="43">
        <dbReference type="Rhea" id="RHEA:66326"/>
    </physiologicalReaction>
</comment>
<comment type="catalytic activity">
    <reaction evidence="32 35">
        <text>hydrogencarbonate(in) + chloride(out) = hydrogencarbonate(out) + chloride(in)</text>
        <dbReference type="Rhea" id="RHEA:72363"/>
        <dbReference type="ChEBI" id="CHEBI:17544"/>
        <dbReference type="ChEBI" id="CHEBI:17996"/>
    </reaction>
</comment>
<comment type="catalytic activity">
    <reaction evidence="1">
        <text>iodide(in) + hydrogencarbonate(out) = iodide(out) + hydrogencarbonate(in)</text>
        <dbReference type="Rhea" id="RHEA:72375"/>
        <dbReference type="ChEBI" id="CHEBI:16382"/>
        <dbReference type="ChEBI" id="CHEBI:17544"/>
    </reaction>
</comment>
<comment type="catalytic activity">
    <reaction evidence="23 32">
        <text>iodide(in) + chloride(out) = iodide(out) + chloride(in)</text>
        <dbReference type="Rhea" id="RHEA:72379"/>
        <dbReference type="ChEBI" id="CHEBI:16382"/>
        <dbReference type="ChEBI" id="CHEBI:17996"/>
    </reaction>
</comment>
<comment type="catalytic activity">
    <reaction evidence="7">
        <text>formate(in) + chloride(out) = formate(out) + chloride(in)</text>
        <dbReference type="Rhea" id="RHEA:72267"/>
        <dbReference type="ChEBI" id="CHEBI:15740"/>
        <dbReference type="ChEBI" id="CHEBI:17996"/>
    </reaction>
</comment>
<comment type="subunit">
    <text evidence="35">Interacts with IQGAP1; this interaction enhances the chloride-bicarbonate exchange activity of SLC26A4.</text>
</comment>
<comment type="subcellular location">
    <subcellularLocation>
        <location evidence="16 32">Cell membrane</location>
        <topology evidence="2">Multi-pass membrane protein</topology>
    </subcellularLocation>
    <subcellularLocation>
        <location evidence="11 35">Apical cell membrane</location>
        <topology evidence="2">Multi-pass membrane protein</topology>
    </subcellularLocation>
</comment>
<comment type="alternative products">
    <event type="alternative splicing"/>
    <isoform>
        <id>O43511-1</id>
        <name>1</name>
        <sequence type="displayed"/>
    </isoform>
    <isoform>
        <id>O43511-2</id>
        <name>2</name>
        <sequence type="described" ref="VSP_056688"/>
    </isoform>
</comment>
<comment type="tissue specificity">
    <text evidence="11 36">Highly expressed in the kidney (at protein level) (PubMed:11274445). High expression in adult thyroid, lower expression in adult and fetal kidney and fetal brain. Not expressed in other tissues (PubMed:9398842).</text>
</comment>
<comment type="disease" evidence="6 9 10 12 13 14 15 16 19 20 22 24 25 26 29 36 38 39">
    <disease id="DI-00905">
        <name>Pendred syndrome</name>
        <acronym>PDS</acronym>
        <description>An autosomal recessive disorder characterized by congenital sensorineural hearing loss in association with thyroid goiter. The disorder may account for up to 10% of the cases of hereditary deafness. The deafness is most often associated with a Mondini cochlear defect. Deafness occurs early, starting at birth or during the first years of life. It is bilateral, sometimes asymmetrical, fluctuant and often progressive. Thyroid perturbations, such as thyroid goiter and/or hypothyroidism appear most commonly during adolescence, but they can be congenital or appear later.</description>
        <dbReference type="MIM" id="274600"/>
    </disease>
    <text>The disease is caused by variants affecting the gene represented in this entry.</text>
</comment>
<comment type="disease" evidence="4 8 14 18 21 22 29 30 31 32 34 37">
    <disease id="DI-00856">
        <name>Deafness, autosomal recessive, 4</name>
        <acronym>DFNB4</acronym>
        <description>A form of non-syndromic sensorineural hearing loss. Sensorineural deafness results from damage to the neural receptors of the inner ear, the nerve pathways to the brain, or the area of the brain that receives sound information. DFNB4 is associated with an enlarged vestibular aqueduct.</description>
        <dbReference type="MIM" id="600791"/>
    </disease>
    <text>The disease is caused by variants affecting the gene represented in this entry.</text>
</comment>
<comment type="similarity">
    <text evidence="41">Belongs to the SLC26A/SulP transporter (TC 2.A.53) family.</text>
</comment>
<comment type="online information" name="Hereditary hearing loss homepage">
    <link uri="https://hereditaryhearingloss.org/recessive"/>
    <text>Gene page</text>
</comment>
<comment type="online information" name="Wikipedia">
    <link uri="https://en.wikipedia.org/wiki/Pendrin"/>
    <text>Pendrin entry</text>
</comment>
<comment type="online information" name="Protein Spotlight">
    <link uri="https://www.proteinspotlight.org/back_issues/133"/>
    <text>A missing sense - Issue 133 of November 2011</text>
</comment>
<keyword id="KW-0025">Alternative splicing</keyword>
<keyword id="KW-1003">Cell membrane</keyword>
<keyword id="KW-0868">Chloride</keyword>
<keyword id="KW-0209">Deafness</keyword>
<keyword id="KW-0225">Disease variant</keyword>
<keyword id="KW-0472">Membrane</keyword>
<keyword id="KW-1010">Non-syndromic deafness</keyword>
<keyword id="KW-1267">Proteomics identification</keyword>
<keyword id="KW-1185">Reference proteome</keyword>
<keyword id="KW-0812">Transmembrane</keyword>
<keyword id="KW-1133">Transmembrane helix</keyword>
<keyword id="KW-0813">Transport</keyword>
<sequence length="780" mass="85723">MAAPGGRSEPPQLPEYSCSYMVSRPVYSELAFQQQHERRLQERKTLRESLAKCCSCSRKRAFGVLKTLVPILEWLPKYRVKEWLLSDVISGVSTGLVATLQGMAYALLAAVPVGYGLYSAFFPILTYFIFGTSRHISVGPFPVVSLMVGSVVLSMAPDEHFLVSSSNGTVLNTTMIDTAARDTARVLIASALTLLVGIIQLIFGGLQIGFIVRYLADPLVGGFTTAAAFQVLVSQLKIVLNVSTKNYNGVLSIIYTLVEIFQNIGDTNLADFTAGLLTIVVCMAVKELNDRFRHKIPVPIPIEVIVTIIATAISYGANLEKNYNAGIVKSIPRGFLPPELPPVSLFSEMLAASFSIAVVAYAIAVSVGKVYATKYDYTIDGNQEFIAFGISNIFSGFFSCFVATTALSRTAVQESTGGKTQVAGIISAAIVMIAILALGKLLEPLQKSVLAAVVIANLKGMFMQLCDIPRLWRQNKIDAVIWVFTCIVSIILGLDLGLLAGLIFGLLTVVLRVQFPSWNGLGSIPSTDIYKSTKNYKNIEEPQGVKILRFSSPIFYGNVDGFKKCIKSTVGFDAIRVYNKRLKALRKIQKLIKSGQLRATKNGIISDAVSTNNAFEPDEDIEDLEELDIPTKEIEIQVDWNSELPVKVNVPKVPIHSLVLDCGAISFLDVVGVRSLRVIVKEFQRIDVNVYFASLQDYVIEKLEQCGFFDDNIRKDTFFLTVHDAILYLQNQVKSQEGQGSILETITLIQDCKDTLELIETELTEEELDVQDEAMRTLAS</sequence>
<protein>
    <recommendedName>
        <fullName>Pendrin</fullName>
    </recommendedName>
    <alternativeName>
        <fullName>Sodium-independent chloride/iodide transporter</fullName>
    </alternativeName>
    <alternativeName>
        <fullName>Solute carrier family 26 member 4</fullName>
    </alternativeName>
</protein>